<sequence length="1148" mass="129172">MDTPESPTQSPQSPEEEEKGLSDNELLESPESPAEADKGVSDSELLNDDENEVPEHGGDSDSEDRDRQPAGREDPEELSDVEDYKLDREEREDIHQQEGALRVQEIAQKAIKSPEEEILETPRSPDPVSPAAEHERPFTPAEEERGDDDEEEEEDETTTKSGLGQAELEEEEDEEEERRRRRRAAMVVSDLKDESSVSRDLDEHELDYDEEVPEEPSAAAPEEDEPEKPAVGEDGEDEEEEDEEEEKRRKRKERKPILPPDNRDTPLRKSEDSREGGRRDSFRDKKKEEDDGEIDEGEIDDDDLEEGEVKDPMDRKIRPRPICRFFMKGSFVTMYGNVKFFFFKSYLVFLTGNCTWGMICRFIHPGVNDKGNYSLISKPDPFSPNGAPPGGAAGGGPHPLMPANPWGAPAVEELPPPPPPLDPPVESAWERGLRHAKEVLKKATIRKEQEPDFEEKRFTVTIGEDDRDFDKENDFFRERGGYRITREIRDAGSDPYGDPYYDYEMEAFWRGGQYENFRVQYTETPLPYYPDRERERDPRERHRERERERERDHRERERRQREREREREREREKDSRRRKDEWDRDRLKRDEKEGRPRERPLREPREKKDEKEKTLKPRSPTNMPPRGPMEPPTKKDMLSVTKRPDEWNDPWCRSKSPRRRPGFMGSPPRGRRRHRPSGSSVSLSNSSRSSSRSSSFTGSGSSRSRSRSRSSSMSSYSSHSSQHSSFSGSRSRSGSFSSSPSPSPSAQRNANKNKAEQPPAAAKGPPLKPGALPPPRRDKGPPKVMPSPSLPEQPGKPPKPITETVKPPNPRPPGRPPGPREPREPPNMREGRKKERQQHNPPRRRTVSGSVSGSSYSGSSSRSRSRSSSASASRSGSHKSRSLSVSSVSSVSSASSSSSSVRSADSDDMYADLASPVSSASSRSPTPGHPRKDRGPPRERGPNKERGKPPKKDEPFKDERKRVDPSGLPSKASSDMPRSGNRGHPMHPPPMGPPGGYGSHKDIKLTLLNKQQTDRSNRKRYFPSDKERPPSPLRKRMAMSPDGGRDRRMPGRPPMSPRMERPKGQGPRPMPSQGERKRPLSPPAKSSGKGPAAASAAKPPAPGAGSGSASGSAPGKPSSTLSRREELLKQLKAVEDAIARKRAKIPGK</sequence>
<name>ZCH18_DANRE</name>
<organism>
    <name type="scientific">Danio rerio</name>
    <name type="common">Zebrafish</name>
    <name type="synonym">Brachydanio rerio</name>
    <dbReference type="NCBI Taxonomy" id="7955"/>
    <lineage>
        <taxon>Eukaryota</taxon>
        <taxon>Metazoa</taxon>
        <taxon>Chordata</taxon>
        <taxon>Craniata</taxon>
        <taxon>Vertebrata</taxon>
        <taxon>Euteleostomi</taxon>
        <taxon>Actinopterygii</taxon>
        <taxon>Neopterygii</taxon>
        <taxon>Teleostei</taxon>
        <taxon>Ostariophysi</taxon>
        <taxon>Cypriniformes</taxon>
        <taxon>Danionidae</taxon>
        <taxon>Danioninae</taxon>
        <taxon>Danio</taxon>
    </lineage>
</organism>
<protein>
    <recommendedName>
        <fullName>Zinc finger CCCH domain-containing protein 18</fullName>
    </recommendedName>
</protein>
<accession>Q1LUE5</accession>
<reference key="1">
    <citation type="journal article" date="2013" name="Nature">
        <title>The zebrafish reference genome sequence and its relationship to the human genome.</title>
        <authorList>
            <person name="Howe K."/>
            <person name="Clark M.D."/>
            <person name="Torroja C.F."/>
            <person name="Torrance J."/>
            <person name="Berthelot C."/>
            <person name="Muffato M."/>
            <person name="Collins J.E."/>
            <person name="Humphray S."/>
            <person name="McLaren K."/>
            <person name="Matthews L."/>
            <person name="McLaren S."/>
            <person name="Sealy I."/>
            <person name="Caccamo M."/>
            <person name="Churcher C."/>
            <person name="Scott C."/>
            <person name="Barrett J.C."/>
            <person name="Koch R."/>
            <person name="Rauch G.J."/>
            <person name="White S."/>
            <person name="Chow W."/>
            <person name="Kilian B."/>
            <person name="Quintais L.T."/>
            <person name="Guerra-Assuncao J.A."/>
            <person name="Zhou Y."/>
            <person name="Gu Y."/>
            <person name="Yen J."/>
            <person name="Vogel J.H."/>
            <person name="Eyre T."/>
            <person name="Redmond S."/>
            <person name="Banerjee R."/>
            <person name="Chi J."/>
            <person name="Fu B."/>
            <person name="Langley E."/>
            <person name="Maguire S.F."/>
            <person name="Laird G.K."/>
            <person name="Lloyd D."/>
            <person name="Kenyon E."/>
            <person name="Donaldson S."/>
            <person name="Sehra H."/>
            <person name="Almeida-King J."/>
            <person name="Loveland J."/>
            <person name="Trevanion S."/>
            <person name="Jones M."/>
            <person name="Quail M."/>
            <person name="Willey D."/>
            <person name="Hunt A."/>
            <person name="Burton J."/>
            <person name="Sims S."/>
            <person name="McLay K."/>
            <person name="Plumb B."/>
            <person name="Davis J."/>
            <person name="Clee C."/>
            <person name="Oliver K."/>
            <person name="Clark R."/>
            <person name="Riddle C."/>
            <person name="Elliot D."/>
            <person name="Threadgold G."/>
            <person name="Harden G."/>
            <person name="Ware D."/>
            <person name="Begum S."/>
            <person name="Mortimore B."/>
            <person name="Kerry G."/>
            <person name="Heath P."/>
            <person name="Phillimore B."/>
            <person name="Tracey A."/>
            <person name="Corby N."/>
            <person name="Dunn M."/>
            <person name="Johnson C."/>
            <person name="Wood J."/>
            <person name="Clark S."/>
            <person name="Pelan S."/>
            <person name="Griffiths G."/>
            <person name="Smith M."/>
            <person name="Glithero R."/>
            <person name="Howden P."/>
            <person name="Barker N."/>
            <person name="Lloyd C."/>
            <person name="Stevens C."/>
            <person name="Harley J."/>
            <person name="Holt K."/>
            <person name="Panagiotidis G."/>
            <person name="Lovell J."/>
            <person name="Beasley H."/>
            <person name="Henderson C."/>
            <person name="Gordon D."/>
            <person name="Auger K."/>
            <person name="Wright D."/>
            <person name="Collins J."/>
            <person name="Raisen C."/>
            <person name="Dyer L."/>
            <person name="Leung K."/>
            <person name="Robertson L."/>
            <person name="Ambridge K."/>
            <person name="Leongamornlert D."/>
            <person name="McGuire S."/>
            <person name="Gilderthorp R."/>
            <person name="Griffiths C."/>
            <person name="Manthravadi D."/>
            <person name="Nichol S."/>
            <person name="Barker G."/>
            <person name="Whitehead S."/>
            <person name="Kay M."/>
            <person name="Brown J."/>
            <person name="Murnane C."/>
            <person name="Gray E."/>
            <person name="Humphries M."/>
            <person name="Sycamore N."/>
            <person name="Barker D."/>
            <person name="Saunders D."/>
            <person name="Wallis J."/>
            <person name="Babbage A."/>
            <person name="Hammond S."/>
            <person name="Mashreghi-Mohammadi M."/>
            <person name="Barr L."/>
            <person name="Martin S."/>
            <person name="Wray P."/>
            <person name="Ellington A."/>
            <person name="Matthews N."/>
            <person name="Ellwood M."/>
            <person name="Woodmansey R."/>
            <person name="Clark G."/>
            <person name="Cooper J."/>
            <person name="Tromans A."/>
            <person name="Grafham D."/>
            <person name="Skuce C."/>
            <person name="Pandian R."/>
            <person name="Andrews R."/>
            <person name="Harrison E."/>
            <person name="Kimberley A."/>
            <person name="Garnett J."/>
            <person name="Fosker N."/>
            <person name="Hall R."/>
            <person name="Garner P."/>
            <person name="Kelly D."/>
            <person name="Bird C."/>
            <person name="Palmer S."/>
            <person name="Gehring I."/>
            <person name="Berger A."/>
            <person name="Dooley C.M."/>
            <person name="Ersan-Urun Z."/>
            <person name="Eser C."/>
            <person name="Geiger H."/>
            <person name="Geisler M."/>
            <person name="Karotki L."/>
            <person name="Kirn A."/>
            <person name="Konantz J."/>
            <person name="Konantz M."/>
            <person name="Oberlander M."/>
            <person name="Rudolph-Geiger S."/>
            <person name="Teucke M."/>
            <person name="Lanz C."/>
            <person name="Raddatz G."/>
            <person name="Osoegawa K."/>
            <person name="Zhu B."/>
            <person name="Rapp A."/>
            <person name="Widaa S."/>
            <person name="Langford C."/>
            <person name="Yang F."/>
            <person name="Schuster S.C."/>
            <person name="Carter N.P."/>
            <person name="Harrow J."/>
            <person name="Ning Z."/>
            <person name="Herrero J."/>
            <person name="Searle S.M."/>
            <person name="Enright A."/>
            <person name="Geisler R."/>
            <person name="Plasterk R.H."/>
            <person name="Lee C."/>
            <person name="Westerfield M."/>
            <person name="de Jong P.J."/>
            <person name="Zon L.I."/>
            <person name="Postlethwait J.H."/>
            <person name="Nusslein-Volhard C."/>
            <person name="Hubbard T.J."/>
            <person name="Roest Crollius H."/>
            <person name="Rogers J."/>
            <person name="Stemple D.L."/>
        </authorList>
    </citation>
    <scope>NUCLEOTIDE SEQUENCE [LARGE SCALE GENOMIC DNA]</scope>
    <source>
        <strain>Tuebingen</strain>
    </source>
</reference>
<reference key="2">
    <citation type="journal article" date="2008" name="J. Proteome Res.">
        <title>Online automated in vivo zebrafish phosphoproteomics: from large-scale analysis down to a single embryo.</title>
        <authorList>
            <person name="Lemeer S."/>
            <person name="Pinkse M.W.H."/>
            <person name="Mohammed S."/>
            <person name="van Breukelen B."/>
            <person name="den Hertog J."/>
            <person name="Slijper M."/>
            <person name="Heck A.J.R."/>
        </authorList>
    </citation>
    <scope>PHOSPHORYLATION [LARGE SCALE ANALYSIS] AT SER-666 AND SER-1056</scope>
    <scope>IDENTIFICATION BY MASS SPECTROMETRY</scope>
    <source>
        <tissue>Embryo</tissue>
    </source>
</reference>
<keyword id="KW-0175">Coiled coil</keyword>
<keyword id="KW-0539">Nucleus</keyword>
<keyword id="KW-0597">Phosphoprotein</keyword>
<keyword id="KW-1185">Reference proteome</keyword>
<gene>
    <name type="primary">zc3h18</name>
    <name type="ORF">si:ch211-218c6.1</name>
</gene>
<proteinExistence type="evidence at protein level"/>
<evidence type="ECO:0000250" key="1"/>
<evidence type="ECO:0000255" key="2"/>
<evidence type="ECO:0000256" key="3">
    <source>
        <dbReference type="SAM" id="MobiDB-lite"/>
    </source>
</evidence>
<evidence type="ECO:0000269" key="4">
    <source>
    </source>
</evidence>
<comment type="subcellular location">
    <subcellularLocation>
        <location evidence="1">Nucleus</location>
    </subcellularLocation>
</comment>
<feature type="chain" id="PRO_0000311245" description="Zinc finger CCCH domain-containing protein 18">
    <location>
        <begin position="1"/>
        <end position="1148"/>
    </location>
</feature>
<feature type="region of interest" description="Disordered" evidence="3">
    <location>
        <begin position="1"/>
        <end position="315"/>
    </location>
</feature>
<feature type="region of interest" description="Disordered" evidence="3">
    <location>
        <begin position="380"/>
        <end position="417"/>
    </location>
</feature>
<feature type="region of interest" description="Disordered" evidence="3">
    <location>
        <begin position="521"/>
        <end position="1127"/>
    </location>
</feature>
<feature type="coiled-coil region" evidence="2">
    <location>
        <begin position="543"/>
        <end position="584"/>
    </location>
</feature>
<feature type="coiled-coil region" evidence="2">
    <location>
        <begin position="1118"/>
        <end position="1146"/>
    </location>
</feature>
<feature type="compositionally biased region" description="Low complexity" evidence="3">
    <location>
        <begin position="1"/>
        <end position="13"/>
    </location>
</feature>
<feature type="compositionally biased region" description="Basic and acidic residues" evidence="3">
    <location>
        <begin position="53"/>
        <end position="73"/>
    </location>
</feature>
<feature type="compositionally biased region" description="Basic and acidic residues" evidence="3">
    <location>
        <begin position="82"/>
        <end position="96"/>
    </location>
</feature>
<feature type="compositionally biased region" description="Acidic residues" evidence="3">
    <location>
        <begin position="144"/>
        <end position="156"/>
    </location>
</feature>
<feature type="compositionally biased region" description="Acidic residues" evidence="3">
    <location>
        <begin position="167"/>
        <end position="176"/>
    </location>
</feature>
<feature type="compositionally biased region" description="Basic and acidic residues" evidence="3">
    <location>
        <begin position="190"/>
        <end position="202"/>
    </location>
</feature>
<feature type="compositionally biased region" description="Acidic residues" evidence="3">
    <location>
        <begin position="203"/>
        <end position="214"/>
    </location>
</feature>
<feature type="compositionally biased region" description="Acidic residues" evidence="3">
    <location>
        <begin position="233"/>
        <end position="245"/>
    </location>
</feature>
<feature type="compositionally biased region" description="Basic and acidic residues" evidence="3">
    <location>
        <begin position="261"/>
        <end position="289"/>
    </location>
</feature>
<feature type="compositionally biased region" description="Acidic residues" evidence="3">
    <location>
        <begin position="290"/>
        <end position="306"/>
    </location>
</feature>
<feature type="compositionally biased region" description="Gly residues" evidence="3">
    <location>
        <begin position="388"/>
        <end position="397"/>
    </location>
</feature>
<feature type="compositionally biased region" description="Basic and acidic residues" evidence="3">
    <location>
        <begin position="530"/>
        <end position="615"/>
    </location>
</feature>
<feature type="compositionally biased region" description="Pro residues" evidence="3">
    <location>
        <begin position="622"/>
        <end position="631"/>
    </location>
</feature>
<feature type="compositionally biased region" description="Basic and acidic residues" evidence="3">
    <location>
        <begin position="632"/>
        <end position="646"/>
    </location>
</feature>
<feature type="compositionally biased region" description="Low complexity" evidence="3">
    <location>
        <begin position="677"/>
        <end position="740"/>
    </location>
</feature>
<feature type="compositionally biased region" description="Pro residues" evidence="3">
    <location>
        <begin position="783"/>
        <end position="800"/>
    </location>
</feature>
<feature type="compositionally biased region" description="Pro residues" evidence="3">
    <location>
        <begin position="807"/>
        <end position="817"/>
    </location>
</feature>
<feature type="compositionally biased region" description="Basic and acidic residues" evidence="3">
    <location>
        <begin position="818"/>
        <end position="833"/>
    </location>
</feature>
<feature type="compositionally biased region" description="Low complexity" evidence="3">
    <location>
        <begin position="847"/>
        <end position="875"/>
    </location>
</feature>
<feature type="compositionally biased region" description="Low complexity" evidence="3">
    <location>
        <begin position="882"/>
        <end position="903"/>
    </location>
</feature>
<feature type="compositionally biased region" description="Low complexity" evidence="3">
    <location>
        <begin position="914"/>
        <end position="925"/>
    </location>
</feature>
<feature type="compositionally biased region" description="Basic and acidic residues" evidence="3">
    <location>
        <begin position="933"/>
        <end position="964"/>
    </location>
</feature>
<feature type="compositionally biased region" description="Basic and acidic residues" evidence="3">
    <location>
        <begin position="1012"/>
        <end position="1029"/>
    </location>
</feature>
<feature type="compositionally biased region" description="Low complexity" evidence="3">
    <location>
        <begin position="1083"/>
        <end position="1098"/>
    </location>
</feature>
<feature type="compositionally biased region" description="Low complexity" evidence="3">
    <location>
        <begin position="1107"/>
        <end position="1119"/>
    </location>
</feature>
<feature type="modified residue" description="Phosphoserine" evidence="4">
    <location>
        <position position="666"/>
    </location>
</feature>
<feature type="modified residue" description="Phosphoserine" evidence="4">
    <location>
        <position position="1056"/>
    </location>
</feature>
<dbReference type="EMBL" id="AL935038">
    <property type="protein sequence ID" value="CAK04265.1"/>
    <property type="molecule type" value="Genomic_DNA"/>
</dbReference>
<dbReference type="EMBL" id="BX950194">
    <property type="protein sequence ID" value="CAK04265.1"/>
    <property type="status" value="JOINED"/>
    <property type="molecule type" value="Genomic_DNA"/>
</dbReference>
<dbReference type="EMBL" id="BX950194">
    <property type="protein sequence ID" value="CAK04529.1"/>
    <property type="molecule type" value="Genomic_DNA"/>
</dbReference>
<dbReference type="EMBL" id="AL935038">
    <property type="protein sequence ID" value="CAK04529.1"/>
    <property type="status" value="JOINED"/>
    <property type="molecule type" value="Genomic_DNA"/>
</dbReference>
<dbReference type="RefSeq" id="NP_001037804.1">
    <property type="nucleotide sequence ID" value="NM_001044339.2"/>
</dbReference>
<dbReference type="FunCoup" id="Q1LUE5">
    <property type="interactions" value="2688"/>
</dbReference>
<dbReference type="STRING" id="7955.ENSDARP00000122210"/>
<dbReference type="iPTMnet" id="Q1LUE5"/>
<dbReference type="PaxDb" id="7955-ENSDARP00000122210"/>
<dbReference type="Ensembl" id="ENSDART00000090446">
    <property type="protein sequence ID" value="ENSDARP00000084879"/>
    <property type="gene ID" value="ENSDARG00000062506"/>
</dbReference>
<dbReference type="Ensembl" id="ENSDART00000141873">
    <property type="protein sequence ID" value="ENSDARP00000122210"/>
    <property type="gene ID" value="ENSDARG00000062506"/>
</dbReference>
<dbReference type="GeneID" id="555770"/>
<dbReference type="KEGG" id="dre:555770"/>
<dbReference type="AGR" id="ZFIN:ZDB-GENE-050419-13"/>
<dbReference type="CTD" id="124245"/>
<dbReference type="ZFIN" id="ZDB-GENE-050419-13">
    <property type="gene designation" value="zc3h18"/>
</dbReference>
<dbReference type="eggNOG" id="ENOG502R7WP">
    <property type="taxonomic scope" value="Eukaryota"/>
</dbReference>
<dbReference type="HOGENOM" id="CLU_012901_0_0_1"/>
<dbReference type="InParanoid" id="Q1LUE5"/>
<dbReference type="OMA" id="PYRNYRR"/>
<dbReference type="OrthoDB" id="10072532at2759"/>
<dbReference type="PhylomeDB" id="Q1LUE5"/>
<dbReference type="TreeFam" id="TF327301"/>
<dbReference type="PRO" id="PR:Q1LUE5"/>
<dbReference type="Proteomes" id="UP000000437">
    <property type="component" value="Alternate scaffold 18"/>
</dbReference>
<dbReference type="Proteomes" id="UP000000437">
    <property type="component" value="Chromosome 18"/>
</dbReference>
<dbReference type="Bgee" id="ENSDARG00000062506">
    <property type="expression patterns" value="Expressed in early embryo and 28 other cell types or tissues"/>
</dbReference>
<dbReference type="ExpressionAtlas" id="Q1LUE5">
    <property type="expression patterns" value="baseline and differential"/>
</dbReference>
<dbReference type="GO" id="GO:0005634">
    <property type="term" value="C:nucleus"/>
    <property type="evidence" value="ECO:0007669"/>
    <property type="project" value="UniProtKB-SubCell"/>
</dbReference>
<dbReference type="InterPro" id="IPR052647">
    <property type="entry name" value="Zinc_finger_CCCH-type"/>
</dbReference>
<dbReference type="PANTHER" id="PTHR46582">
    <property type="entry name" value="ZINC FINGER CCCH DOMAIN-CONTAINING PROTEIN 18"/>
    <property type="match status" value="1"/>
</dbReference>
<dbReference type="PANTHER" id="PTHR46582:SF1">
    <property type="entry name" value="ZINC FINGER CCCH DOMAIN-CONTAINING PROTEIN 18"/>
    <property type="match status" value="1"/>
</dbReference>